<keyword id="KW-0903">Direct protein sequencing</keyword>
<keyword id="KW-1015">Disulfide bond</keyword>
<keyword id="KW-0646">Protease inhibitor</keyword>
<keyword id="KW-0964">Secreted</keyword>
<keyword id="KW-0722">Serine protease inhibitor</keyword>
<feature type="chain" id="PRO_0000208668" description="Protease inhibitor SIL-V2">
    <location>
        <begin position="1"/>
        <end position="109"/>
    </location>
</feature>
<feature type="site" description="Reactive bond" evidence="1">
    <location>
        <begin position="69"/>
        <end position="70"/>
    </location>
</feature>
<feature type="disulfide bond" evidence="1">
    <location>
        <begin position="30"/>
        <end position="45"/>
    </location>
</feature>
<feature type="disulfide bond" evidence="1">
    <location>
        <begin position="67"/>
        <end position="97"/>
    </location>
</feature>
<reference key="1">
    <citation type="journal article" date="1997" name="J. Mol. Evol.">
        <title>Molecular phylogenetic characterization of Streptomyces protease inhibitor family.</title>
        <authorList>
            <person name="Taguchi S."/>
            <person name="Kojima S."/>
            <person name="Terabe M."/>
            <person name="Kumazawa Y."/>
            <person name="Kohriyama H."/>
            <person name="Suzuki M."/>
            <person name="Miura K."/>
            <person name="Momose H."/>
        </authorList>
    </citation>
    <scope>PROTEIN SEQUENCE</scope>
    <source>
        <strain>ISP 5571</strain>
    </source>
</reference>
<accession>P80597</accession>
<protein>
    <recommendedName>
        <fullName>Protease inhibitor SIL-V2</fullName>
    </recommendedName>
</protein>
<proteinExistence type="evidence at protein level"/>
<evidence type="ECO:0000250" key="1"/>
<evidence type="ECO:0000305" key="2"/>
<name>SSI_STRON</name>
<organism>
    <name type="scientific">Streptomyces orinoci</name>
    <name type="common">Streptoverticillium orinoci</name>
    <dbReference type="NCBI Taxonomy" id="67339"/>
    <lineage>
        <taxon>Bacteria</taxon>
        <taxon>Bacillati</taxon>
        <taxon>Actinomycetota</taxon>
        <taxon>Actinomycetes</taxon>
        <taxon>Kitasatosporales</taxon>
        <taxon>Streptomycetaceae</taxon>
        <taxon>Streptomyces</taxon>
    </lineage>
</organism>
<comment type="subunit">
    <text evidence="1">Homodimer.</text>
</comment>
<comment type="subcellular location">
    <subcellularLocation>
        <location evidence="1">Secreted</location>
    </subcellularLocation>
</comment>
<comment type="similarity">
    <text evidence="2">Belongs to the protease inhibitor I16 (SSI) family.</text>
</comment>
<dbReference type="SMR" id="P80597"/>
<dbReference type="MEROPS" id="I16.016"/>
<dbReference type="GO" id="GO:0005576">
    <property type="term" value="C:extracellular region"/>
    <property type="evidence" value="ECO:0007669"/>
    <property type="project" value="UniProtKB-SubCell"/>
</dbReference>
<dbReference type="GO" id="GO:0004867">
    <property type="term" value="F:serine-type endopeptidase inhibitor activity"/>
    <property type="evidence" value="ECO:0007669"/>
    <property type="project" value="UniProtKB-UniRule"/>
</dbReference>
<dbReference type="Gene3D" id="3.30.350.10">
    <property type="entry name" value="Subtilisin inhibitor-like"/>
    <property type="match status" value="1"/>
</dbReference>
<dbReference type="HAMAP" id="MF_00778">
    <property type="entry name" value="SSI"/>
    <property type="match status" value="1"/>
</dbReference>
<dbReference type="InterPro" id="IPR000691">
    <property type="entry name" value="Prot_inh_I16_SSI"/>
</dbReference>
<dbReference type="InterPro" id="IPR020054">
    <property type="entry name" value="Prot_inh_SSI_I16_CS"/>
</dbReference>
<dbReference type="InterPro" id="IPR023549">
    <property type="entry name" value="Subtilisin_inhibitor"/>
</dbReference>
<dbReference type="InterPro" id="IPR036819">
    <property type="entry name" value="Subtilisin_inhibitor-like_sf"/>
</dbReference>
<dbReference type="Pfam" id="PF00720">
    <property type="entry name" value="SSI"/>
    <property type="match status" value="1"/>
</dbReference>
<dbReference type="PRINTS" id="PR00294">
    <property type="entry name" value="SSBTLNINHBTR"/>
</dbReference>
<dbReference type="SUPFAM" id="SSF55399">
    <property type="entry name" value="Subtilisin inhibitor"/>
    <property type="match status" value="1"/>
</dbReference>
<dbReference type="PROSITE" id="PS00999">
    <property type="entry name" value="SSI"/>
    <property type="match status" value="1"/>
</dbReference>
<sequence>SLYAPSALVLTIGQGDSASAGIQRAVTLSCMPTPSGTHPDARDACAQLRQADGKFDELTATKAGTYCTKEWNPVTVTATGVWEGQRVNYSHTFGNPCMAKAAKSTVFSF</sequence>